<gene>
    <name type="primary">ftnB</name>
    <name type="synonym">rsgA-B</name>
    <name type="ordered locus">HI_1385</name>
</gene>
<keyword id="KW-0963">Cytoplasm</keyword>
<keyword id="KW-0408">Iron</keyword>
<keyword id="KW-0409">Iron storage</keyword>
<keyword id="KW-0479">Metal-binding</keyword>
<keyword id="KW-0560">Oxidoreductase</keyword>
<keyword id="KW-1185">Reference proteome</keyword>
<dbReference type="EMBL" id="L42023">
    <property type="protein sequence ID" value="AAC23032.1"/>
    <property type="molecule type" value="Genomic_DNA"/>
</dbReference>
<dbReference type="PIR" id="B64121">
    <property type="entry name" value="B64121"/>
</dbReference>
<dbReference type="RefSeq" id="NP_439537.1">
    <property type="nucleotide sequence ID" value="NC_000907.1"/>
</dbReference>
<dbReference type="SMR" id="P43708"/>
<dbReference type="STRING" id="71421.HI_1385"/>
<dbReference type="EnsemblBacteria" id="AAC23032">
    <property type="protein sequence ID" value="AAC23032"/>
    <property type="gene ID" value="HI_1385"/>
</dbReference>
<dbReference type="KEGG" id="hin:HI_1385"/>
<dbReference type="PATRIC" id="fig|71421.8.peg.1441"/>
<dbReference type="eggNOG" id="COG1528">
    <property type="taxonomic scope" value="Bacteria"/>
</dbReference>
<dbReference type="HOGENOM" id="CLU_065681_1_0_6"/>
<dbReference type="OrthoDB" id="9801481at2"/>
<dbReference type="PhylomeDB" id="P43708"/>
<dbReference type="BioCyc" id="HINF71421:G1GJ1-1411-MONOMER"/>
<dbReference type="Proteomes" id="UP000000579">
    <property type="component" value="Chromosome"/>
</dbReference>
<dbReference type="GO" id="GO:0005737">
    <property type="term" value="C:cytoplasm"/>
    <property type="evidence" value="ECO:0000318"/>
    <property type="project" value="GO_Central"/>
</dbReference>
<dbReference type="GO" id="GO:0005829">
    <property type="term" value="C:cytosol"/>
    <property type="evidence" value="ECO:0000318"/>
    <property type="project" value="GO_Central"/>
</dbReference>
<dbReference type="GO" id="GO:0008199">
    <property type="term" value="F:ferric iron binding"/>
    <property type="evidence" value="ECO:0000318"/>
    <property type="project" value="GO_Central"/>
</dbReference>
<dbReference type="GO" id="GO:0008198">
    <property type="term" value="F:ferrous iron binding"/>
    <property type="evidence" value="ECO:0000318"/>
    <property type="project" value="GO_Central"/>
</dbReference>
<dbReference type="GO" id="GO:0004322">
    <property type="term" value="F:ferroxidase activity"/>
    <property type="evidence" value="ECO:0000318"/>
    <property type="project" value="GO_Central"/>
</dbReference>
<dbReference type="GO" id="GO:0006879">
    <property type="term" value="P:intracellular iron ion homeostasis"/>
    <property type="evidence" value="ECO:0007669"/>
    <property type="project" value="UniProtKB-KW"/>
</dbReference>
<dbReference type="GO" id="GO:0006826">
    <property type="term" value="P:iron ion transport"/>
    <property type="evidence" value="ECO:0007669"/>
    <property type="project" value="InterPro"/>
</dbReference>
<dbReference type="CDD" id="cd01055">
    <property type="entry name" value="Nonheme_Ferritin"/>
    <property type="match status" value="1"/>
</dbReference>
<dbReference type="FunFam" id="1.20.1260.10:FF:000001">
    <property type="entry name" value="Non-heme ferritin"/>
    <property type="match status" value="1"/>
</dbReference>
<dbReference type="Gene3D" id="1.20.1260.10">
    <property type="match status" value="1"/>
</dbReference>
<dbReference type="InterPro" id="IPR001519">
    <property type="entry name" value="Ferritin"/>
</dbReference>
<dbReference type="InterPro" id="IPR012347">
    <property type="entry name" value="Ferritin-like"/>
</dbReference>
<dbReference type="InterPro" id="IPR009040">
    <property type="entry name" value="Ferritin-like_diiron"/>
</dbReference>
<dbReference type="InterPro" id="IPR009078">
    <property type="entry name" value="Ferritin-like_SF"/>
</dbReference>
<dbReference type="InterPro" id="IPR008331">
    <property type="entry name" value="Ferritin_DPS_dom"/>
</dbReference>
<dbReference type="InterPro" id="IPR041719">
    <property type="entry name" value="Ferritin_prok"/>
</dbReference>
<dbReference type="NCBIfam" id="NF007638">
    <property type="entry name" value="PRK10304.1"/>
    <property type="match status" value="1"/>
</dbReference>
<dbReference type="PANTHER" id="PTHR11431:SF127">
    <property type="entry name" value="BACTERIAL NON-HEME FERRITIN"/>
    <property type="match status" value="1"/>
</dbReference>
<dbReference type="PANTHER" id="PTHR11431">
    <property type="entry name" value="FERRITIN"/>
    <property type="match status" value="1"/>
</dbReference>
<dbReference type="Pfam" id="PF00210">
    <property type="entry name" value="Ferritin"/>
    <property type="match status" value="1"/>
</dbReference>
<dbReference type="SUPFAM" id="SSF47240">
    <property type="entry name" value="Ferritin-like"/>
    <property type="match status" value="1"/>
</dbReference>
<dbReference type="PROSITE" id="PS50905">
    <property type="entry name" value="FERRITIN_LIKE"/>
    <property type="match status" value="1"/>
</dbReference>
<proteinExistence type="inferred from homology"/>
<accession>P43708</accession>
<protein>
    <recommendedName>
        <fullName>Probable bacterial non-heme ferritin-like protein</fullName>
    </recommendedName>
</protein>
<organism>
    <name type="scientific">Haemophilus influenzae (strain ATCC 51907 / DSM 11121 / KW20 / Rd)</name>
    <dbReference type="NCBI Taxonomy" id="71421"/>
    <lineage>
        <taxon>Bacteria</taxon>
        <taxon>Pseudomonadati</taxon>
        <taxon>Pseudomonadota</taxon>
        <taxon>Gammaproteobacteria</taxon>
        <taxon>Pasteurellales</taxon>
        <taxon>Pasteurellaceae</taxon>
        <taxon>Haemophilus</taxon>
    </lineage>
</organism>
<name>FTN2_HAEIN</name>
<sequence length="165" mass="19021">MLSENVVKLLNDQMNLEFYSSNLYLQMSAWCDQQGFEGTAKFLSVHAAEEMQHMRKLFTYLNETGSLAVISAIEAPAHEYKSLKEVIETTYEHEKLITSKINELVGKTFEEKDYSAFNFLQWYVEEQHEEEKLFSSILDKLNFLGEDGKGLFLIDKDLGNLSTKA</sequence>
<comment type="subcellular location">
    <subcellularLocation>
        <location evidence="1">Cytoplasm</location>
    </subcellularLocation>
</comment>
<comment type="similarity">
    <text evidence="3">Belongs to the ferritin family. Prokaryotic subfamily.</text>
</comment>
<evidence type="ECO:0000250" key="1"/>
<evidence type="ECO:0000255" key="2">
    <source>
        <dbReference type="PROSITE-ProRule" id="PRU00085"/>
    </source>
</evidence>
<evidence type="ECO:0000305" key="3"/>
<feature type="chain" id="PRO_0000201094" description="Probable bacterial non-heme ferritin-like protein">
    <location>
        <begin position="1"/>
        <end position="165"/>
    </location>
</feature>
<feature type="domain" description="Ferritin-like diiron" evidence="2">
    <location>
        <begin position="1"/>
        <end position="145"/>
    </location>
</feature>
<feature type="binding site" evidence="2">
    <location>
        <position position="17"/>
    </location>
    <ligand>
        <name>Fe cation</name>
        <dbReference type="ChEBI" id="CHEBI:24875"/>
        <label>1</label>
    </ligand>
</feature>
<feature type="binding site" evidence="2">
    <location>
        <position position="50"/>
    </location>
    <ligand>
        <name>Fe cation</name>
        <dbReference type="ChEBI" id="CHEBI:24875"/>
        <label>1</label>
    </ligand>
</feature>
<feature type="binding site" evidence="2">
    <location>
        <position position="50"/>
    </location>
    <ligand>
        <name>Fe cation</name>
        <dbReference type="ChEBI" id="CHEBI:24875"/>
        <label>2</label>
    </ligand>
</feature>
<feature type="binding site" evidence="2">
    <location>
        <position position="53"/>
    </location>
    <ligand>
        <name>Fe cation</name>
        <dbReference type="ChEBI" id="CHEBI:24875"/>
        <label>1</label>
    </ligand>
</feature>
<feature type="binding site" evidence="2">
    <location>
        <position position="94"/>
    </location>
    <ligand>
        <name>Fe cation</name>
        <dbReference type="ChEBI" id="CHEBI:24875"/>
        <label>2</label>
    </ligand>
</feature>
<feature type="binding site" evidence="2">
    <location>
        <position position="127"/>
    </location>
    <ligand>
        <name>Fe cation</name>
        <dbReference type="ChEBI" id="CHEBI:24875"/>
        <label>2</label>
    </ligand>
</feature>
<reference key="1">
    <citation type="journal article" date="1995" name="Science">
        <title>Whole-genome random sequencing and assembly of Haemophilus influenzae Rd.</title>
        <authorList>
            <person name="Fleischmann R.D."/>
            <person name="Adams M.D."/>
            <person name="White O."/>
            <person name="Clayton R.A."/>
            <person name="Kirkness E.F."/>
            <person name="Kerlavage A.R."/>
            <person name="Bult C.J."/>
            <person name="Tomb J.-F."/>
            <person name="Dougherty B.A."/>
            <person name="Merrick J.M."/>
            <person name="McKenney K."/>
            <person name="Sutton G.G."/>
            <person name="FitzHugh W."/>
            <person name="Fields C.A."/>
            <person name="Gocayne J.D."/>
            <person name="Scott J.D."/>
            <person name="Shirley R."/>
            <person name="Liu L.-I."/>
            <person name="Glodek A."/>
            <person name="Kelley J.M."/>
            <person name="Weidman J.F."/>
            <person name="Phillips C.A."/>
            <person name="Spriggs T."/>
            <person name="Hedblom E."/>
            <person name="Cotton M.D."/>
            <person name="Utterback T.R."/>
            <person name="Hanna M.C."/>
            <person name="Nguyen D.T."/>
            <person name="Saudek D.M."/>
            <person name="Brandon R.C."/>
            <person name="Fine L.D."/>
            <person name="Fritchman J.L."/>
            <person name="Fuhrmann J.L."/>
            <person name="Geoghagen N.S.M."/>
            <person name="Gnehm C.L."/>
            <person name="McDonald L.A."/>
            <person name="Small K.V."/>
            <person name="Fraser C.M."/>
            <person name="Smith H.O."/>
            <person name="Venter J.C."/>
        </authorList>
    </citation>
    <scope>NUCLEOTIDE SEQUENCE [LARGE SCALE GENOMIC DNA]</scope>
    <source>
        <strain>ATCC 51907 / DSM 11121 / KW20 / Rd</strain>
    </source>
</reference>